<keyword id="KW-0560">Oxidoreductase</keyword>
<keyword id="KW-0819">tRNA processing</keyword>
<organism>
    <name type="scientific">Neorickettsia sennetsu (strain ATCC VR-367 / Miyayama)</name>
    <name type="common">Ehrlichia sennetsu</name>
    <dbReference type="NCBI Taxonomy" id="222891"/>
    <lineage>
        <taxon>Bacteria</taxon>
        <taxon>Pseudomonadati</taxon>
        <taxon>Pseudomonadota</taxon>
        <taxon>Alphaproteobacteria</taxon>
        <taxon>Rickettsiales</taxon>
        <taxon>Anaplasmataceae</taxon>
        <taxon>Neorickettsia</taxon>
    </lineage>
</organism>
<comment type="function">
    <text evidence="1">Catalyzes oxygen-dependent 5-hydroxyuridine (ho5U) modification at position 34 in tRNAs.</text>
</comment>
<comment type="catalytic activity">
    <reaction evidence="1">
        <text>uridine(34) in tRNA + AH2 + O2 = 5-hydroxyuridine(34) in tRNA + A + H2O</text>
        <dbReference type="Rhea" id="RHEA:64224"/>
        <dbReference type="Rhea" id="RHEA-COMP:11727"/>
        <dbReference type="Rhea" id="RHEA-COMP:13381"/>
        <dbReference type="ChEBI" id="CHEBI:13193"/>
        <dbReference type="ChEBI" id="CHEBI:15377"/>
        <dbReference type="ChEBI" id="CHEBI:15379"/>
        <dbReference type="ChEBI" id="CHEBI:17499"/>
        <dbReference type="ChEBI" id="CHEBI:65315"/>
        <dbReference type="ChEBI" id="CHEBI:136877"/>
    </reaction>
</comment>
<comment type="similarity">
    <text evidence="1">Belongs to the TrhO family.</text>
</comment>
<comment type="sequence caution" evidence="2">
    <conflict type="erroneous initiation">
        <sequence resource="EMBL-CDS" id="ABD45618"/>
    </conflict>
</comment>
<gene>
    <name evidence="1" type="primary">trhO</name>
    <name type="ordered locus">NSE_0255</name>
</gene>
<reference key="1">
    <citation type="journal article" date="2006" name="PLoS Genet.">
        <title>Comparative genomics of emerging human ehrlichiosis agents.</title>
        <authorList>
            <person name="Dunning Hotopp J.C."/>
            <person name="Lin M."/>
            <person name="Madupu R."/>
            <person name="Crabtree J."/>
            <person name="Angiuoli S.V."/>
            <person name="Eisen J.A."/>
            <person name="Seshadri R."/>
            <person name="Ren Q."/>
            <person name="Wu M."/>
            <person name="Utterback T.R."/>
            <person name="Smith S."/>
            <person name="Lewis M."/>
            <person name="Khouri H."/>
            <person name="Zhang C."/>
            <person name="Niu H."/>
            <person name="Lin Q."/>
            <person name="Ohashi N."/>
            <person name="Zhi N."/>
            <person name="Nelson W.C."/>
            <person name="Brinkac L.M."/>
            <person name="Dodson R.J."/>
            <person name="Rosovitz M.J."/>
            <person name="Sundaram J.P."/>
            <person name="Daugherty S.C."/>
            <person name="Davidsen T."/>
            <person name="Durkin A.S."/>
            <person name="Gwinn M.L."/>
            <person name="Haft D.H."/>
            <person name="Selengut J.D."/>
            <person name="Sullivan S.A."/>
            <person name="Zafar N."/>
            <person name="Zhou L."/>
            <person name="Benahmed F."/>
            <person name="Forberger H."/>
            <person name="Halpin R."/>
            <person name="Mulligan S."/>
            <person name="Robinson J."/>
            <person name="White O."/>
            <person name="Rikihisa Y."/>
            <person name="Tettelin H."/>
        </authorList>
    </citation>
    <scope>NUCLEOTIDE SEQUENCE [LARGE SCALE GENOMIC DNA]</scope>
    <source>
        <strain>ATCC VR-367 / Miyayama</strain>
    </source>
</reference>
<name>TRHO_NEOSM</name>
<protein>
    <recommendedName>
        <fullName evidence="1">tRNA uridine(34) hydroxylase</fullName>
        <ecNumber evidence="1">1.14.-.-</ecNumber>
    </recommendedName>
    <alternativeName>
        <fullName evidence="1">tRNA hydroxylation protein O</fullName>
    </alternativeName>
</protein>
<dbReference type="EC" id="1.14.-.-" evidence="1"/>
<dbReference type="EMBL" id="CP000237">
    <property type="protein sequence ID" value="ABD45618.1"/>
    <property type="status" value="ALT_INIT"/>
    <property type="molecule type" value="Genomic_DNA"/>
</dbReference>
<dbReference type="RefSeq" id="WP_041917553.1">
    <property type="nucleotide sequence ID" value="NC_007798.1"/>
</dbReference>
<dbReference type="SMR" id="Q2GEE8"/>
<dbReference type="STRING" id="222891.NSE_0255"/>
<dbReference type="KEGG" id="nse:NSE_0255"/>
<dbReference type="eggNOG" id="COG1054">
    <property type="taxonomic scope" value="Bacteria"/>
</dbReference>
<dbReference type="HOGENOM" id="CLU_038878_0_1_5"/>
<dbReference type="OrthoDB" id="9778326at2"/>
<dbReference type="Proteomes" id="UP000001942">
    <property type="component" value="Chromosome"/>
</dbReference>
<dbReference type="GO" id="GO:0016705">
    <property type="term" value="F:oxidoreductase activity, acting on paired donors, with incorporation or reduction of molecular oxygen"/>
    <property type="evidence" value="ECO:0007669"/>
    <property type="project" value="UniProtKB-UniRule"/>
</dbReference>
<dbReference type="GO" id="GO:0006400">
    <property type="term" value="P:tRNA modification"/>
    <property type="evidence" value="ECO:0007669"/>
    <property type="project" value="UniProtKB-UniRule"/>
</dbReference>
<dbReference type="Gene3D" id="3.30.70.100">
    <property type="match status" value="1"/>
</dbReference>
<dbReference type="Gene3D" id="3.40.250.10">
    <property type="entry name" value="Rhodanese-like domain"/>
    <property type="match status" value="1"/>
</dbReference>
<dbReference type="HAMAP" id="MF_00469">
    <property type="entry name" value="TrhO"/>
    <property type="match status" value="1"/>
</dbReference>
<dbReference type="InterPro" id="IPR001763">
    <property type="entry name" value="Rhodanese-like_dom"/>
</dbReference>
<dbReference type="InterPro" id="IPR036873">
    <property type="entry name" value="Rhodanese-like_dom_sf"/>
</dbReference>
<dbReference type="InterPro" id="IPR020936">
    <property type="entry name" value="TrhO"/>
</dbReference>
<dbReference type="InterPro" id="IPR040503">
    <property type="entry name" value="TRHO_N"/>
</dbReference>
<dbReference type="PANTHER" id="PTHR43268:SF3">
    <property type="entry name" value="RHODANESE-LIKE DOMAIN-CONTAINING PROTEIN 7-RELATED"/>
    <property type="match status" value="1"/>
</dbReference>
<dbReference type="PANTHER" id="PTHR43268">
    <property type="entry name" value="THIOSULFATE SULFURTRANSFERASE/RHODANESE-LIKE DOMAIN-CONTAINING PROTEIN 2"/>
    <property type="match status" value="1"/>
</dbReference>
<dbReference type="Pfam" id="PF00581">
    <property type="entry name" value="Rhodanese"/>
    <property type="match status" value="1"/>
</dbReference>
<dbReference type="Pfam" id="PF17773">
    <property type="entry name" value="UPF0176_N"/>
    <property type="match status" value="1"/>
</dbReference>
<dbReference type="SMART" id="SM00450">
    <property type="entry name" value="RHOD"/>
    <property type="match status" value="1"/>
</dbReference>
<dbReference type="SUPFAM" id="SSF52821">
    <property type="entry name" value="Rhodanese/Cell cycle control phosphatase"/>
    <property type="match status" value="1"/>
</dbReference>
<dbReference type="PROSITE" id="PS50206">
    <property type="entry name" value="RHODANESE_3"/>
    <property type="match status" value="1"/>
</dbReference>
<feature type="chain" id="PRO_0000242925" description="tRNA uridine(34) hydroxylase">
    <location>
        <begin position="1"/>
        <end position="281"/>
    </location>
</feature>
<feature type="domain" description="Rhodanese" evidence="1">
    <location>
        <begin position="125"/>
        <end position="222"/>
    </location>
</feature>
<feature type="active site" description="Cysteine persulfide intermediate" evidence="1">
    <location>
        <position position="182"/>
    </location>
</feature>
<evidence type="ECO:0000255" key="1">
    <source>
        <dbReference type="HAMAP-Rule" id="MF_00469"/>
    </source>
</evidence>
<evidence type="ECO:0000305" key="2"/>
<proteinExistence type="inferred from homology"/>
<sequence length="281" mass="32623">MEKFTLVTFYHFVQLENYEDMRDELLSCCIEKGLKGTVLLALEGINGSVAGHDGEIRDFLDFVRRDERLRGLEWKESYTNFQPFQEMKVRLKKEIVALGCAELENMEICETGEYVEPEDWSSLIAREDVKTIDTRNLYETKLGRFKYSIDPETINFRDFQEWVRKWIEKDNVSMEQKIAMYCTGGVRCEKSTAYMKRIGFKNVYQLKGGIINYFLKTKNKDGAWVGDCFVFDDRVAVNVDLEPIQLKCLECSCVVNTDDLKNIPRGRVLCSGCGQNTTRFS</sequence>
<accession>Q2GEE8</accession>